<protein>
    <recommendedName>
        <fullName evidence="2">Small ribosomal subunit protein uS12</fullName>
    </recommendedName>
    <alternativeName>
        <fullName evidence="3">30S ribosomal protein S12</fullName>
    </alternativeName>
</protein>
<name>RS12_ACIBS</name>
<dbReference type="EMBL" id="CU468230">
    <property type="protein sequence ID" value="CAP01880.1"/>
    <property type="molecule type" value="Genomic_DNA"/>
</dbReference>
<dbReference type="SMR" id="B0VTG5"/>
<dbReference type="KEGG" id="abm:ABSDF2570"/>
<dbReference type="HOGENOM" id="CLU_104295_1_2_6"/>
<dbReference type="Proteomes" id="UP000001741">
    <property type="component" value="Chromosome"/>
</dbReference>
<dbReference type="GO" id="GO:0015935">
    <property type="term" value="C:small ribosomal subunit"/>
    <property type="evidence" value="ECO:0007669"/>
    <property type="project" value="InterPro"/>
</dbReference>
<dbReference type="GO" id="GO:0019843">
    <property type="term" value="F:rRNA binding"/>
    <property type="evidence" value="ECO:0007669"/>
    <property type="project" value="UniProtKB-UniRule"/>
</dbReference>
<dbReference type="GO" id="GO:0003735">
    <property type="term" value="F:structural constituent of ribosome"/>
    <property type="evidence" value="ECO:0007669"/>
    <property type="project" value="InterPro"/>
</dbReference>
<dbReference type="GO" id="GO:0000049">
    <property type="term" value="F:tRNA binding"/>
    <property type="evidence" value="ECO:0007669"/>
    <property type="project" value="UniProtKB-UniRule"/>
</dbReference>
<dbReference type="GO" id="GO:0006412">
    <property type="term" value="P:translation"/>
    <property type="evidence" value="ECO:0007669"/>
    <property type="project" value="UniProtKB-UniRule"/>
</dbReference>
<dbReference type="CDD" id="cd03368">
    <property type="entry name" value="Ribosomal_S12"/>
    <property type="match status" value="1"/>
</dbReference>
<dbReference type="FunFam" id="2.40.50.140:FF:000001">
    <property type="entry name" value="30S ribosomal protein S12"/>
    <property type="match status" value="1"/>
</dbReference>
<dbReference type="Gene3D" id="2.40.50.140">
    <property type="entry name" value="Nucleic acid-binding proteins"/>
    <property type="match status" value="1"/>
</dbReference>
<dbReference type="HAMAP" id="MF_00403_B">
    <property type="entry name" value="Ribosomal_uS12_B"/>
    <property type="match status" value="1"/>
</dbReference>
<dbReference type="InterPro" id="IPR012340">
    <property type="entry name" value="NA-bd_OB-fold"/>
</dbReference>
<dbReference type="InterPro" id="IPR006032">
    <property type="entry name" value="Ribosomal_uS12"/>
</dbReference>
<dbReference type="InterPro" id="IPR005679">
    <property type="entry name" value="Ribosomal_uS12_bac"/>
</dbReference>
<dbReference type="NCBIfam" id="TIGR00981">
    <property type="entry name" value="rpsL_bact"/>
    <property type="match status" value="1"/>
</dbReference>
<dbReference type="PANTHER" id="PTHR11652">
    <property type="entry name" value="30S RIBOSOMAL PROTEIN S12 FAMILY MEMBER"/>
    <property type="match status" value="1"/>
</dbReference>
<dbReference type="Pfam" id="PF00164">
    <property type="entry name" value="Ribosom_S12_S23"/>
    <property type="match status" value="1"/>
</dbReference>
<dbReference type="PIRSF" id="PIRSF002133">
    <property type="entry name" value="Ribosomal_S12/S23"/>
    <property type="match status" value="1"/>
</dbReference>
<dbReference type="PRINTS" id="PR01034">
    <property type="entry name" value="RIBOSOMALS12"/>
</dbReference>
<dbReference type="SUPFAM" id="SSF50249">
    <property type="entry name" value="Nucleic acid-binding proteins"/>
    <property type="match status" value="1"/>
</dbReference>
<dbReference type="PROSITE" id="PS00055">
    <property type="entry name" value="RIBOSOMAL_S12"/>
    <property type="match status" value="1"/>
</dbReference>
<accession>B0VTG5</accession>
<sequence>MATTNQLIRKGRTTLVEKSKVPALKACPQRRGVCTRVYTTTPKKPNSAMRKVCRVRLTSGFEVSSYIGGEGHNLQEHSVVLIRGGRVKDLPGVRYHTVRGSLDCAGVKDRNQSRSKYGAKRPKK</sequence>
<comment type="function">
    <text evidence="2">With S4 and S5 plays an important role in translational accuracy.</text>
</comment>
<comment type="function">
    <text evidence="2">Interacts with and stabilizes bases of the 16S rRNA that are involved in tRNA selection in the A site and with the mRNA backbone. Located at the interface of the 30S and 50S subunits, it traverses the body of the 30S subunit contacting proteins on the other side and probably holding the rRNA structure together. The combined cluster of proteins S8, S12 and S17 appears to hold together the shoulder and platform of the 30S subunit.</text>
</comment>
<comment type="subunit">
    <text evidence="2">Part of the 30S ribosomal subunit. Contacts proteins S8 and S17. May interact with IF1 in the 30S initiation complex.</text>
</comment>
<comment type="similarity">
    <text evidence="2">Belongs to the universal ribosomal protein uS12 family.</text>
</comment>
<feature type="chain" id="PRO_1000194107" description="Small ribosomal subunit protein uS12">
    <location>
        <begin position="1"/>
        <end position="124"/>
    </location>
</feature>
<feature type="modified residue" description="3-methylthioaspartic acid" evidence="1">
    <location>
        <position position="89"/>
    </location>
</feature>
<evidence type="ECO:0000250" key="1"/>
<evidence type="ECO:0000255" key="2">
    <source>
        <dbReference type="HAMAP-Rule" id="MF_00403"/>
    </source>
</evidence>
<evidence type="ECO:0000305" key="3"/>
<keyword id="KW-0488">Methylation</keyword>
<keyword id="KW-0687">Ribonucleoprotein</keyword>
<keyword id="KW-0689">Ribosomal protein</keyword>
<keyword id="KW-0694">RNA-binding</keyword>
<keyword id="KW-0699">rRNA-binding</keyword>
<keyword id="KW-0820">tRNA-binding</keyword>
<gene>
    <name evidence="2" type="primary">rpsL</name>
    <name type="ordered locus">ABSDF2570</name>
</gene>
<organism>
    <name type="scientific">Acinetobacter baumannii (strain SDF)</name>
    <dbReference type="NCBI Taxonomy" id="509170"/>
    <lineage>
        <taxon>Bacteria</taxon>
        <taxon>Pseudomonadati</taxon>
        <taxon>Pseudomonadota</taxon>
        <taxon>Gammaproteobacteria</taxon>
        <taxon>Moraxellales</taxon>
        <taxon>Moraxellaceae</taxon>
        <taxon>Acinetobacter</taxon>
        <taxon>Acinetobacter calcoaceticus/baumannii complex</taxon>
    </lineage>
</organism>
<reference key="1">
    <citation type="journal article" date="2008" name="PLoS ONE">
        <title>Comparative analysis of Acinetobacters: three genomes for three lifestyles.</title>
        <authorList>
            <person name="Vallenet D."/>
            <person name="Nordmann P."/>
            <person name="Barbe V."/>
            <person name="Poirel L."/>
            <person name="Mangenot S."/>
            <person name="Bataille E."/>
            <person name="Dossat C."/>
            <person name="Gas S."/>
            <person name="Kreimeyer A."/>
            <person name="Lenoble P."/>
            <person name="Oztas S."/>
            <person name="Poulain J."/>
            <person name="Segurens B."/>
            <person name="Robert C."/>
            <person name="Abergel C."/>
            <person name="Claverie J.-M."/>
            <person name="Raoult D."/>
            <person name="Medigue C."/>
            <person name="Weissenbach J."/>
            <person name="Cruveiller S."/>
        </authorList>
    </citation>
    <scope>NUCLEOTIDE SEQUENCE [LARGE SCALE GENOMIC DNA]</scope>
    <source>
        <strain>SDF</strain>
    </source>
</reference>
<proteinExistence type="inferred from homology"/>